<proteinExistence type="predicted"/>
<keyword id="KW-0963">Cytoplasm</keyword>
<keyword id="KW-0206">Cytoskeleton</keyword>
<keyword id="KW-1185">Reference proteome</keyword>
<reference key="1">
    <citation type="journal article" date="2002" name="Nature">
        <title>The genome sequence of Schizosaccharomyces pombe.</title>
        <authorList>
            <person name="Wood V."/>
            <person name="Gwilliam R."/>
            <person name="Rajandream M.A."/>
            <person name="Lyne M.H."/>
            <person name="Lyne R."/>
            <person name="Stewart A."/>
            <person name="Sgouros J.G."/>
            <person name="Peat N."/>
            <person name="Hayles J."/>
            <person name="Baker S.G."/>
            <person name="Basham D."/>
            <person name="Bowman S."/>
            <person name="Brooks K."/>
            <person name="Brown D."/>
            <person name="Brown S."/>
            <person name="Chillingworth T."/>
            <person name="Churcher C.M."/>
            <person name="Collins M."/>
            <person name="Connor R."/>
            <person name="Cronin A."/>
            <person name="Davis P."/>
            <person name="Feltwell T."/>
            <person name="Fraser A."/>
            <person name="Gentles S."/>
            <person name="Goble A."/>
            <person name="Hamlin N."/>
            <person name="Harris D.E."/>
            <person name="Hidalgo J."/>
            <person name="Hodgson G."/>
            <person name="Holroyd S."/>
            <person name="Hornsby T."/>
            <person name="Howarth S."/>
            <person name="Huckle E.J."/>
            <person name="Hunt S."/>
            <person name="Jagels K."/>
            <person name="James K.D."/>
            <person name="Jones L."/>
            <person name="Jones M."/>
            <person name="Leather S."/>
            <person name="McDonald S."/>
            <person name="McLean J."/>
            <person name="Mooney P."/>
            <person name="Moule S."/>
            <person name="Mungall K.L."/>
            <person name="Murphy L.D."/>
            <person name="Niblett D."/>
            <person name="Odell C."/>
            <person name="Oliver K."/>
            <person name="O'Neil S."/>
            <person name="Pearson D."/>
            <person name="Quail M.A."/>
            <person name="Rabbinowitsch E."/>
            <person name="Rutherford K.M."/>
            <person name="Rutter S."/>
            <person name="Saunders D."/>
            <person name="Seeger K."/>
            <person name="Sharp S."/>
            <person name="Skelton J."/>
            <person name="Simmonds M.N."/>
            <person name="Squares R."/>
            <person name="Squares S."/>
            <person name="Stevens K."/>
            <person name="Taylor K."/>
            <person name="Taylor R.G."/>
            <person name="Tivey A."/>
            <person name="Walsh S.V."/>
            <person name="Warren T."/>
            <person name="Whitehead S."/>
            <person name="Woodward J.R."/>
            <person name="Volckaert G."/>
            <person name="Aert R."/>
            <person name="Robben J."/>
            <person name="Grymonprez B."/>
            <person name="Weltjens I."/>
            <person name="Vanstreels E."/>
            <person name="Rieger M."/>
            <person name="Schaefer M."/>
            <person name="Mueller-Auer S."/>
            <person name="Gabel C."/>
            <person name="Fuchs M."/>
            <person name="Duesterhoeft A."/>
            <person name="Fritzc C."/>
            <person name="Holzer E."/>
            <person name="Moestl D."/>
            <person name="Hilbert H."/>
            <person name="Borzym K."/>
            <person name="Langer I."/>
            <person name="Beck A."/>
            <person name="Lehrach H."/>
            <person name="Reinhardt R."/>
            <person name="Pohl T.M."/>
            <person name="Eger P."/>
            <person name="Zimmermann W."/>
            <person name="Wedler H."/>
            <person name="Wambutt R."/>
            <person name="Purnelle B."/>
            <person name="Goffeau A."/>
            <person name="Cadieu E."/>
            <person name="Dreano S."/>
            <person name="Gloux S."/>
            <person name="Lelaure V."/>
            <person name="Mottier S."/>
            <person name="Galibert F."/>
            <person name="Aves S.J."/>
            <person name="Xiang Z."/>
            <person name="Hunt C."/>
            <person name="Moore K."/>
            <person name="Hurst S.M."/>
            <person name="Lucas M."/>
            <person name="Rochet M."/>
            <person name="Gaillardin C."/>
            <person name="Tallada V.A."/>
            <person name="Garzon A."/>
            <person name="Thode G."/>
            <person name="Daga R.R."/>
            <person name="Cruzado L."/>
            <person name="Jimenez J."/>
            <person name="Sanchez M."/>
            <person name="del Rey F."/>
            <person name="Benito J."/>
            <person name="Dominguez A."/>
            <person name="Revuelta J.L."/>
            <person name="Moreno S."/>
            <person name="Armstrong J."/>
            <person name="Forsburg S.L."/>
            <person name="Cerutti L."/>
            <person name="Lowe T."/>
            <person name="McCombie W.R."/>
            <person name="Paulsen I."/>
            <person name="Potashkin J."/>
            <person name="Shpakovski G.V."/>
            <person name="Ussery D."/>
            <person name="Barrell B.G."/>
            <person name="Nurse P."/>
        </authorList>
    </citation>
    <scope>NUCLEOTIDE SEQUENCE [LARGE SCALE GENOMIC DNA]</scope>
    <source>
        <strain>972 / ATCC 24843</strain>
    </source>
</reference>
<reference key="2">
    <citation type="journal article" date="2006" name="Nat. Biotechnol.">
        <title>ORFeome cloning and global analysis of protein localization in the fission yeast Schizosaccharomyces pombe.</title>
        <authorList>
            <person name="Matsuyama A."/>
            <person name="Arai R."/>
            <person name="Yashiroda Y."/>
            <person name="Shirai A."/>
            <person name="Kamata A."/>
            <person name="Sekido S."/>
            <person name="Kobayashi Y."/>
            <person name="Hashimoto A."/>
            <person name="Hamamoto M."/>
            <person name="Hiraoka Y."/>
            <person name="Horinouchi S."/>
            <person name="Yoshida M."/>
        </authorList>
    </citation>
    <scope>SUBCELLULAR LOCATION [LARGE SCALE ANALYSIS]</scope>
</reference>
<evidence type="ECO:0000269" key="1">
    <source>
    </source>
</evidence>
<dbReference type="EMBL" id="CU329670">
    <property type="protein sequence ID" value="CAB53406.1"/>
    <property type="molecule type" value="Genomic_DNA"/>
</dbReference>
<dbReference type="PIR" id="T38640">
    <property type="entry name" value="T38640"/>
</dbReference>
<dbReference type="BioGRID" id="279533">
    <property type="interactions" value="33"/>
</dbReference>
<dbReference type="STRING" id="284812.Q9UT96"/>
<dbReference type="PaxDb" id="4896-SPAC323.03c.1"/>
<dbReference type="EnsemblFungi" id="SPAC323.03c.1">
    <property type="protein sequence ID" value="SPAC323.03c.1:pep"/>
    <property type="gene ID" value="SPAC323.03c"/>
</dbReference>
<dbReference type="KEGG" id="spo:2543101"/>
<dbReference type="PomBase" id="SPAC323.03c"/>
<dbReference type="VEuPathDB" id="FungiDB:SPAC323.03c"/>
<dbReference type="HOGENOM" id="CLU_472638_0_0_1"/>
<dbReference type="InParanoid" id="Q9UT96"/>
<dbReference type="OMA" id="KETIMIH"/>
<dbReference type="PRO" id="PR:Q9UT96"/>
<dbReference type="Proteomes" id="UP000002485">
    <property type="component" value="Chromosome I"/>
</dbReference>
<dbReference type="GO" id="GO:0032153">
    <property type="term" value="C:cell division site"/>
    <property type="evidence" value="ECO:0007005"/>
    <property type="project" value="PomBase"/>
</dbReference>
<dbReference type="GO" id="GO:0005737">
    <property type="term" value="C:cytoplasm"/>
    <property type="evidence" value="ECO:0007005"/>
    <property type="project" value="PomBase"/>
</dbReference>
<dbReference type="GO" id="GO:0072686">
    <property type="term" value="C:mitotic spindle"/>
    <property type="evidence" value="ECO:0007005"/>
    <property type="project" value="PomBase"/>
</dbReference>
<dbReference type="GO" id="GO:0044732">
    <property type="term" value="C:mitotic spindle pole body"/>
    <property type="evidence" value="ECO:0007005"/>
    <property type="project" value="PomBase"/>
</dbReference>
<dbReference type="GO" id="GO:0005634">
    <property type="term" value="C:nucleus"/>
    <property type="evidence" value="ECO:0007005"/>
    <property type="project" value="PomBase"/>
</dbReference>
<dbReference type="GO" id="GO:1990429">
    <property type="term" value="C:peroxisomal importomer complex"/>
    <property type="evidence" value="ECO:0000266"/>
    <property type="project" value="PomBase"/>
</dbReference>
<dbReference type="GO" id="GO:0030674">
    <property type="term" value="F:protein-macromolecule adaptor activity"/>
    <property type="evidence" value="ECO:0000266"/>
    <property type="project" value="PomBase"/>
</dbReference>
<dbReference type="GO" id="GO:0016558">
    <property type="term" value="P:protein import into peroxisome matrix"/>
    <property type="evidence" value="ECO:0000266"/>
    <property type="project" value="PomBase"/>
</dbReference>
<organism>
    <name type="scientific">Schizosaccharomyces pombe (strain 972 / ATCC 24843)</name>
    <name type="common">Fission yeast</name>
    <dbReference type="NCBI Taxonomy" id="284812"/>
    <lineage>
        <taxon>Eukaryota</taxon>
        <taxon>Fungi</taxon>
        <taxon>Dikarya</taxon>
        <taxon>Ascomycota</taxon>
        <taxon>Taphrinomycotina</taxon>
        <taxon>Schizosaccharomycetes</taxon>
        <taxon>Schizosaccharomycetales</taxon>
        <taxon>Schizosaccharomycetaceae</taxon>
        <taxon>Schizosaccharomyces</taxon>
    </lineage>
</organism>
<accession>Q9UT96</accession>
<comment type="subcellular location">
    <subcellularLocation>
        <location evidence="1">Cytoplasm</location>
        <location evidence="1">Cytoskeleton</location>
        <location evidence="1">Microtubule organizing center</location>
        <location evidence="1">Spindle pole body</location>
    </subcellularLocation>
    <text>Localizes also at the barrier septum.</text>
</comment>
<protein>
    <recommendedName>
        <fullName>Uncharacterized protein C323.03c</fullName>
    </recommendedName>
</protein>
<gene>
    <name type="ORF">SPAC323.03c</name>
</gene>
<sequence length="575" mass="66195">MEEAINNVLLLLREDSISLETVLWETHYVLLNLHNEQNLRLVVAQLIACGRIWDYWNEHRSEYFAFWVELISRKKVTNNGLPFSSFVKSIVGILEVDASNEILCFRRICLLCVFYKLLSCDHIVNLQYPLKRAVSKALSKQIKTHQFSGFEANFLLQQLFASVDSSASDISFDAFSLLPHLLKWEEIVWSGFINYLDTEHKRDSLPTAVLCHLLLRLSTYQQISIIKRLITLIDKAIPSWKSRSSDSKYNDHQFVKKNFFSIIMVLESLAKSQYRKSNVLAADRSLCEYIILTLFHMEYLFSFVASSWSTLDFVITTCLSRVAQPAKFISETVREAIIDSIQLEGYVDLQKLSGSPVLVTLSFINNWQNLICRRLEKQTVNEKVITLSSTAKEISSLGLSFAEKLISQSDESTLCKHYVYASLYACLFCNLNEGSPKDYLDNDIYVHARCLFLLTKTLNLDSLKSILCSRVRLYYNIEIAYYFTDVLLKWFQPIIRYEFDNALIFYKASISLVSVLAPAAQKQFLSNYLNSIQGFSTETKEDLIFLVSSQIRQMPYQNATSLLSFWLSIVVGRAV</sequence>
<name>YL43_SCHPO</name>
<feature type="chain" id="PRO_0000304041" description="Uncharacterized protein C323.03c">
    <location>
        <begin position="1"/>
        <end position="575"/>
    </location>
</feature>